<organism>
    <name type="scientific">Bacillus atrophaeus</name>
    <dbReference type="NCBI Taxonomy" id="1452"/>
    <lineage>
        <taxon>Bacteria</taxon>
        <taxon>Bacillati</taxon>
        <taxon>Bacillota</taxon>
        <taxon>Bacilli</taxon>
        <taxon>Bacillales</taxon>
        <taxon>Bacillaceae</taxon>
        <taxon>Bacillus</taxon>
    </lineage>
</organism>
<evidence type="ECO:0000250" key="1">
    <source>
        <dbReference type="UniProtKB" id="A7B1V0"/>
    </source>
</evidence>
<evidence type="ECO:0000269" key="2">
    <source>
    </source>
</evidence>
<evidence type="ECO:0000269" key="3">
    <source>
    </source>
</evidence>
<evidence type="ECO:0000303" key="4">
    <source>
    </source>
</evidence>
<evidence type="ECO:0000303" key="5">
    <source>
    </source>
</evidence>
<evidence type="ECO:0000305" key="6"/>
<evidence type="ECO:0000305" key="7">
    <source>
    </source>
</evidence>
<comment type="function">
    <text evidence="2 3 7">Involved in bacillamide C biosynthesis (Probable). Catalyzes the decarboxylation of L-tryptophan to tryptamine (PubMed:23628927, PubMed:33713143). The tryptamine obtained is then probably incorporated into the bacillamide C peptide, which is derived from the amino acids alanine, cysteine and tryptophan through nonribosomal peptide synthetase (NRPS) biosynthesis strategy (Probable). L-tryptophan is the best substrate, but the enzyme displays broad substrate specificity for various aromatic amino acids in vitro and it can also catalyze the decarboxylation of L-phenylalanine, 5-hydroxy-L-tryptophan (L-HTP) and L-DOPA, with lower efficiency (PubMed:23628927, PubMed:33713143). Exhibits weak activity with L-tyrosine (PubMed:33713143).</text>
</comment>
<comment type="catalytic activity">
    <reaction evidence="2 3">
        <text>L-tryptophan + H(+) = tryptamine + CO2</text>
        <dbReference type="Rhea" id="RHEA:30339"/>
        <dbReference type="ChEBI" id="CHEBI:15378"/>
        <dbReference type="ChEBI" id="CHEBI:16526"/>
        <dbReference type="ChEBI" id="CHEBI:57887"/>
        <dbReference type="ChEBI" id="CHEBI:57912"/>
        <dbReference type="EC" id="4.1.1.28"/>
    </reaction>
    <physiologicalReaction direction="left-to-right" evidence="2">
        <dbReference type="Rhea" id="RHEA:30340"/>
    </physiologicalReaction>
</comment>
<comment type="catalytic activity">
    <reaction evidence="2 3">
        <text>L-phenylalanine + H(+) = 2-phenylethylamine + CO2</text>
        <dbReference type="Rhea" id="RHEA:19717"/>
        <dbReference type="ChEBI" id="CHEBI:15378"/>
        <dbReference type="ChEBI" id="CHEBI:16526"/>
        <dbReference type="ChEBI" id="CHEBI:58095"/>
        <dbReference type="ChEBI" id="CHEBI:225237"/>
    </reaction>
</comment>
<comment type="catalytic activity">
    <reaction evidence="3">
        <text>5-hydroxy-L-tryptophan + H(+) = serotonin + CO2</text>
        <dbReference type="Rhea" id="RHEA:18533"/>
        <dbReference type="ChEBI" id="CHEBI:15378"/>
        <dbReference type="ChEBI" id="CHEBI:16526"/>
        <dbReference type="ChEBI" id="CHEBI:58266"/>
        <dbReference type="ChEBI" id="CHEBI:350546"/>
        <dbReference type="EC" id="4.1.1.28"/>
    </reaction>
</comment>
<comment type="catalytic activity">
    <reaction evidence="3">
        <text>L-dopa + H(+) = dopamine + CO2</text>
        <dbReference type="Rhea" id="RHEA:12272"/>
        <dbReference type="ChEBI" id="CHEBI:15378"/>
        <dbReference type="ChEBI" id="CHEBI:16526"/>
        <dbReference type="ChEBI" id="CHEBI:57504"/>
        <dbReference type="ChEBI" id="CHEBI:59905"/>
        <dbReference type="EC" id="4.1.1.28"/>
    </reaction>
</comment>
<comment type="cofactor">
    <cofactor evidence="1">
        <name>pyridoxal 5'-phosphate</name>
        <dbReference type="ChEBI" id="CHEBI:597326"/>
    </cofactor>
</comment>
<comment type="biophysicochemical properties">
    <kinetics>
        <KM evidence="2">0.35 mM for L-tryptophan</KM>
        <KM evidence="3">0.27 mM for L-tryptophan (at 37 degrees Celsius)</KM>
        <KM evidence="2">0.872 mM for L-phenylalanine</KM>
        <KM evidence="3">10 mM for L-phenylalanine (at 30 degrees Celsius)</KM>
        <KM evidence="3">7.2 mM for L-phenylalanine (at 37 degrees Celsius)</KM>
        <KM evidence="3">6.9 mM for L-phenylalanine (at 45 degrees Celsius)</KM>
        <KM evidence="3">5.4 mM for L-phenylalanine (at 55 degrees Celsius)</KM>
        <text evidence="3">kcat is 6.7 sec(-1) with L-tryptophan as substrate (at 37 degrees Celsius) (PubMed:33713143). kcat is 7.0 sec(-1) with L-phenylalanine as substrate (at 30 degrees Celsius) (PubMed:33713143). kcat is 7.4 sec(-1) with L-phenylalanine as substrate (at 37 and 45 degrees Celsius) (PubMed:33713143). kcat is 4.3 sec(-1) with L-phenylalanine as substrate (at 55 degrees Celsius) (PubMed:33713143).</text>
    </kinetics>
    <phDependence>
        <text evidence="3">Shows a working pH range between 6.0 and 8.0.</text>
    </phDependence>
    <temperatureDependence>
        <text evidence="3">Optimum temperature is between 37 and 45 degrees Celsius (PubMed:33713143). Loses most of its activity above 55 degrees Celsius (PubMed:33713143).</text>
    </temperatureDependence>
</comment>
<comment type="biotechnology">
    <text evidence="3">The broad substrate specificity of AADC-BA could be exploited to produce various aromatic biogenic amines.</text>
</comment>
<comment type="similarity">
    <text evidence="6">Belongs to the group II decarboxylase family.</text>
</comment>
<accession>I0DFJ0</accession>
<accession>A0A080UMP9</accession>
<protein>
    <recommendedName>
        <fullName evidence="4">Aromatic-L-amino-acid decarboxylase</fullName>
        <shortName evidence="4">AADC</shortName>
        <ecNumber evidence="2 3">4.1.1.28</ecNumber>
    </recommendedName>
    <alternativeName>
        <fullName evidence="5">AADC-BA</fullName>
    </alternativeName>
</protein>
<keyword id="KW-0210">Decarboxylase</keyword>
<keyword id="KW-0456">Lyase</keyword>
<keyword id="KW-0663">Pyridoxal phosphate</keyword>
<sequence length="480" mass="53548">MSENLQLSAEEMRQLGYQAVDLIIDHMNHLKSKPVSETIDSDILRNKLTESIPENGSDPKELLHFLNRNVFNQITHVDHPHFLAFVPGPNNYVGVVADFLASGFNVFPTAWIAGAGAEQIELTTINWLKSMLGFPDSAEGLFVSGGSMANLTALTVARQAKLNNDIENAVVYFSDQTHFSVDRALKVLGFKHHQICRIETDEHLRISVSALKKQIKEDRTKGKKPFCVIANAGTTNCGAVDSLNELADLCNDEDVWLHADGSYGAPAILSEKGSAMLQGIHRADSLTLDPHKWLFQPYDVGCVLIRNSQYLSKTFRMMPEYIKDSETNVEGEINFGECGIELSRRFRALKVWLSFKVFGVAAFRQAIDHGIMLAEQVEAFLGKAKDWEVVTPAQLGIVTFRYIPSELASTDTINEINKKLVKEITHRGFAMLSTTELKEKVVIRLCSINPRTTTEEMLQIMMKIKALAEEVSISYPCVAE</sequence>
<name>AADC_BACAT</name>
<proteinExistence type="evidence at protein level"/>
<reference key="1">
    <citation type="journal article" date="2013" name="Sci. Rep.">
        <title>The role of aromatic L-amino acid decarboxylase in bacillamide C biosynthesis by Bacillus atrophaeus C89.</title>
        <authorList>
            <person name="Yuwen L."/>
            <person name="Zhang F.L."/>
            <person name="Chen Q.H."/>
            <person name="Lin S.J."/>
            <person name="Zhao Y.L."/>
            <person name="Li Z.Y."/>
        </authorList>
    </citation>
    <scope>NUCLEOTIDE SEQUENCE [GENOMIC DNA]</scope>
    <scope>FUNCTION</scope>
    <scope>CATALYTIC ACTIVITY</scope>
    <scope>BIOPHYSICOCHEMICAL PROPERTIES</scope>
    <source>
        <strain>C89</strain>
    </source>
</reference>
<reference key="2">
    <citation type="journal article" date="2021" name="Appl. Microbiol. Biotechnol.">
        <title>Biochemical characterization and synthetic application of aromatic L-amino acid decarboxylase from Bacillus atrophaeus.</title>
        <authorList>
            <person name="Choi Y."/>
            <person name="Han S.W."/>
            <person name="Kim J.S."/>
            <person name="Jang Y."/>
            <person name="Shin J.S."/>
        </authorList>
    </citation>
    <scope>FUNCTION</scope>
    <scope>CATALYTIC ACTIVITY</scope>
    <scope>BIOPHYSICOCHEMICAL PROPERTIES</scope>
    <scope>BIOTECHNOLOGY</scope>
    <source>
        <strain>C89</strain>
    </source>
</reference>
<feature type="chain" id="PRO_0000457344" description="Aromatic-L-amino-acid decarboxylase">
    <location>
        <begin position="1"/>
        <end position="480"/>
    </location>
</feature>
<feature type="modified residue" description="N6-(pyridoxal phosphate)lysine" evidence="1">
    <location>
        <position position="292"/>
    </location>
</feature>
<dbReference type="EC" id="4.1.1.28" evidence="2 3"/>
<dbReference type="EMBL" id="JQ400024">
    <property type="protein sequence ID" value="AFH88381.1"/>
    <property type="molecule type" value="Genomic_DNA"/>
</dbReference>
<dbReference type="RefSeq" id="WP_003327896.1">
    <property type="nucleotide sequence ID" value="NZ_VLYP01000009.1"/>
</dbReference>
<dbReference type="SMR" id="I0DFJ0"/>
<dbReference type="STRING" id="1452.TD68_18630"/>
<dbReference type="OMA" id="NPGFNWS"/>
<dbReference type="BRENDA" id="4.1.1.28">
    <property type="organism ID" value="12924"/>
</dbReference>
<dbReference type="SABIO-RK" id="I0DFJ0"/>
<dbReference type="GO" id="GO:0004058">
    <property type="term" value="F:aromatic-L-amino-acid decarboxylase activity"/>
    <property type="evidence" value="ECO:0007669"/>
    <property type="project" value="UniProtKB-ARBA"/>
</dbReference>
<dbReference type="GO" id="GO:0030170">
    <property type="term" value="F:pyridoxal phosphate binding"/>
    <property type="evidence" value="ECO:0007669"/>
    <property type="project" value="InterPro"/>
</dbReference>
<dbReference type="GO" id="GO:0006520">
    <property type="term" value="P:amino acid metabolic process"/>
    <property type="evidence" value="ECO:0007669"/>
    <property type="project" value="InterPro"/>
</dbReference>
<dbReference type="GO" id="GO:0019752">
    <property type="term" value="P:carboxylic acid metabolic process"/>
    <property type="evidence" value="ECO:0007669"/>
    <property type="project" value="InterPro"/>
</dbReference>
<dbReference type="Gene3D" id="3.90.1150.10">
    <property type="entry name" value="Aspartate Aminotransferase, domain 1"/>
    <property type="match status" value="1"/>
</dbReference>
<dbReference type="Gene3D" id="1.20.1340.10">
    <property type="entry name" value="dopa decarboxylase, N-terminal domain"/>
    <property type="match status" value="1"/>
</dbReference>
<dbReference type="Gene3D" id="3.40.640.10">
    <property type="entry name" value="Type I PLP-dependent aspartate aminotransferase-like (Major domain)"/>
    <property type="match status" value="1"/>
</dbReference>
<dbReference type="InterPro" id="IPR010977">
    <property type="entry name" value="Aromatic_deC"/>
</dbReference>
<dbReference type="InterPro" id="IPR002129">
    <property type="entry name" value="PyrdxlP-dep_de-COase"/>
</dbReference>
<dbReference type="InterPro" id="IPR015424">
    <property type="entry name" value="PyrdxlP-dep_Trfase"/>
</dbReference>
<dbReference type="InterPro" id="IPR015421">
    <property type="entry name" value="PyrdxlP-dep_Trfase_major"/>
</dbReference>
<dbReference type="InterPro" id="IPR015422">
    <property type="entry name" value="PyrdxlP-dep_Trfase_small"/>
</dbReference>
<dbReference type="PANTHER" id="PTHR11999">
    <property type="entry name" value="GROUP II PYRIDOXAL-5-PHOSPHATE DECARBOXYLASE"/>
    <property type="match status" value="1"/>
</dbReference>
<dbReference type="PANTHER" id="PTHR11999:SF70">
    <property type="entry name" value="MIP05841P"/>
    <property type="match status" value="1"/>
</dbReference>
<dbReference type="Pfam" id="PF00282">
    <property type="entry name" value="Pyridoxal_deC"/>
    <property type="match status" value="1"/>
</dbReference>
<dbReference type="PRINTS" id="PR00800">
    <property type="entry name" value="YHDCRBOXLASE"/>
</dbReference>
<dbReference type="SUPFAM" id="SSF53383">
    <property type="entry name" value="PLP-dependent transferases"/>
    <property type="match status" value="1"/>
</dbReference>